<name>MIAA2_GEODF</name>
<comment type="function">
    <text evidence="1">Catalyzes the transfer of a dimethylallyl group onto the adenine at position 37 in tRNAs that read codons beginning with uridine, leading to the formation of N6-(dimethylallyl)adenosine (i(6)A).</text>
</comment>
<comment type="catalytic activity">
    <reaction evidence="1">
        <text>adenosine(37) in tRNA + dimethylallyl diphosphate = N(6)-dimethylallyladenosine(37) in tRNA + diphosphate</text>
        <dbReference type="Rhea" id="RHEA:26482"/>
        <dbReference type="Rhea" id="RHEA-COMP:10162"/>
        <dbReference type="Rhea" id="RHEA-COMP:10375"/>
        <dbReference type="ChEBI" id="CHEBI:33019"/>
        <dbReference type="ChEBI" id="CHEBI:57623"/>
        <dbReference type="ChEBI" id="CHEBI:74411"/>
        <dbReference type="ChEBI" id="CHEBI:74415"/>
        <dbReference type="EC" id="2.5.1.75"/>
    </reaction>
</comment>
<comment type="cofactor">
    <cofactor evidence="1">
        <name>Mg(2+)</name>
        <dbReference type="ChEBI" id="CHEBI:18420"/>
    </cofactor>
</comment>
<comment type="subunit">
    <text evidence="1">Monomer.</text>
</comment>
<comment type="similarity">
    <text evidence="1">Belongs to the IPP transferase family.</text>
</comment>
<proteinExistence type="inferred from homology"/>
<protein>
    <recommendedName>
        <fullName evidence="1">tRNA dimethylallyltransferase 2</fullName>
        <ecNumber evidence="1">2.5.1.75</ecNumber>
    </recommendedName>
    <alternativeName>
        <fullName evidence="1">Dimethylallyl diphosphate:tRNA dimethylallyltransferase 2</fullName>
        <shortName evidence="1">DMAPP:tRNA dimethylallyltransferase 2</shortName>
        <shortName evidence="1">DMATase 2</shortName>
    </alternativeName>
    <alternativeName>
        <fullName evidence="1">Isopentenyl-diphosphate:tRNA isopentenyltransferase 2</fullName>
        <shortName evidence="1">IPP transferase 2</shortName>
        <shortName evidence="1">IPPT 2</shortName>
        <shortName evidence="1">IPTase 2</shortName>
    </alternativeName>
</protein>
<feature type="chain" id="PRO_0000377173" description="tRNA dimethylallyltransferase 2">
    <location>
        <begin position="1"/>
        <end position="326"/>
    </location>
</feature>
<feature type="region of interest" description="Interaction with substrate tRNA" evidence="1">
    <location>
        <begin position="39"/>
        <end position="42"/>
    </location>
</feature>
<feature type="binding site" evidence="1">
    <location>
        <begin position="14"/>
        <end position="21"/>
    </location>
    <ligand>
        <name>ATP</name>
        <dbReference type="ChEBI" id="CHEBI:30616"/>
    </ligand>
</feature>
<feature type="binding site" evidence="1">
    <location>
        <begin position="16"/>
        <end position="21"/>
    </location>
    <ligand>
        <name>substrate</name>
    </ligand>
</feature>
<feature type="site" description="Interaction with substrate tRNA" evidence="1">
    <location>
        <position position="105"/>
    </location>
</feature>
<feature type="site" description="Interaction with substrate tRNA" evidence="1">
    <location>
        <position position="127"/>
    </location>
</feature>
<evidence type="ECO:0000255" key="1">
    <source>
        <dbReference type="HAMAP-Rule" id="MF_00185"/>
    </source>
</evidence>
<reference key="1">
    <citation type="submission" date="2009-01" db="EMBL/GenBank/DDBJ databases">
        <title>Complete sequence of Geobacter sp. FRC-32.</title>
        <authorList>
            <consortium name="US DOE Joint Genome Institute"/>
            <person name="Lucas S."/>
            <person name="Copeland A."/>
            <person name="Lapidus A."/>
            <person name="Glavina del Rio T."/>
            <person name="Dalin E."/>
            <person name="Tice H."/>
            <person name="Bruce D."/>
            <person name="Goodwin L."/>
            <person name="Pitluck S."/>
            <person name="Saunders E."/>
            <person name="Brettin T."/>
            <person name="Detter J.C."/>
            <person name="Han C."/>
            <person name="Larimer F."/>
            <person name="Land M."/>
            <person name="Hauser L."/>
            <person name="Kyrpides N."/>
            <person name="Ovchinnikova G."/>
            <person name="Kostka J."/>
            <person name="Richardson P."/>
        </authorList>
    </citation>
    <scope>NUCLEOTIDE SEQUENCE [LARGE SCALE GENOMIC DNA]</scope>
    <source>
        <strain>DSM 22248 / JCM 15807 / FRC-32</strain>
    </source>
</reference>
<accession>B9M3M9</accession>
<dbReference type="EC" id="2.5.1.75" evidence="1"/>
<dbReference type="EMBL" id="CP001390">
    <property type="protein sequence ID" value="ACM21450.1"/>
    <property type="molecule type" value="Genomic_DNA"/>
</dbReference>
<dbReference type="RefSeq" id="WP_012648178.1">
    <property type="nucleotide sequence ID" value="NC_011979.1"/>
</dbReference>
<dbReference type="SMR" id="B9M3M9"/>
<dbReference type="STRING" id="316067.Geob_3107"/>
<dbReference type="KEGG" id="geo:Geob_3107"/>
<dbReference type="eggNOG" id="COG0324">
    <property type="taxonomic scope" value="Bacteria"/>
</dbReference>
<dbReference type="HOGENOM" id="CLU_032616_0_1_7"/>
<dbReference type="OrthoDB" id="9776390at2"/>
<dbReference type="Proteomes" id="UP000007721">
    <property type="component" value="Chromosome"/>
</dbReference>
<dbReference type="GO" id="GO:0005524">
    <property type="term" value="F:ATP binding"/>
    <property type="evidence" value="ECO:0007669"/>
    <property type="project" value="UniProtKB-UniRule"/>
</dbReference>
<dbReference type="GO" id="GO:0052381">
    <property type="term" value="F:tRNA dimethylallyltransferase activity"/>
    <property type="evidence" value="ECO:0007669"/>
    <property type="project" value="UniProtKB-UniRule"/>
</dbReference>
<dbReference type="GO" id="GO:0006400">
    <property type="term" value="P:tRNA modification"/>
    <property type="evidence" value="ECO:0007669"/>
    <property type="project" value="TreeGrafter"/>
</dbReference>
<dbReference type="FunFam" id="1.10.20.140:FF:000001">
    <property type="entry name" value="tRNA dimethylallyltransferase"/>
    <property type="match status" value="1"/>
</dbReference>
<dbReference type="Gene3D" id="1.10.20.140">
    <property type="match status" value="1"/>
</dbReference>
<dbReference type="Gene3D" id="3.40.50.300">
    <property type="entry name" value="P-loop containing nucleotide triphosphate hydrolases"/>
    <property type="match status" value="1"/>
</dbReference>
<dbReference type="HAMAP" id="MF_00185">
    <property type="entry name" value="IPP_trans"/>
    <property type="match status" value="1"/>
</dbReference>
<dbReference type="InterPro" id="IPR039657">
    <property type="entry name" value="Dimethylallyltransferase"/>
</dbReference>
<dbReference type="InterPro" id="IPR018022">
    <property type="entry name" value="IPT"/>
</dbReference>
<dbReference type="InterPro" id="IPR027417">
    <property type="entry name" value="P-loop_NTPase"/>
</dbReference>
<dbReference type="NCBIfam" id="TIGR00174">
    <property type="entry name" value="miaA"/>
    <property type="match status" value="1"/>
</dbReference>
<dbReference type="PANTHER" id="PTHR11088">
    <property type="entry name" value="TRNA DIMETHYLALLYLTRANSFERASE"/>
    <property type="match status" value="1"/>
</dbReference>
<dbReference type="PANTHER" id="PTHR11088:SF60">
    <property type="entry name" value="TRNA DIMETHYLALLYLTRANSFERASE"/>
    <property type="match status" value="1"/>
</dbReference>
<dbReference type="Pfam" id="PF01715">
    <property type="entry name" value="IPPT"/>
    <property type="match status" value="1"/>
</dbReference>
<dbReference type="SUPFAM" id="SSF52540">
    <property type="entry name" value="P-loop containing nucleoside triphosphate hydrolases"/>
    <property type="match status" value="2"/>
</dbReference>
<organism>
    <name type="scientific">Geotalea daltonii (strain DSM 22248 / JCM 15807 / FRC-32)</name>
    <name type="common">Geobacter daltonii</name>
    <dbReference type="NCBI Taxonomy" id="316067"/>
    <lineage>
        <taxon>Bacteria</taxon>
        <taxon>Pseudomonadati</taxon>
        <taxon>Thermodesulfobacteriota</taxon>
        <taxon>Desulfuromonadia</taxon>
        <taxon>Geobacterales</taxon>
        <taxon>Geobacteraceae</taxon>
        <taxon>Geotalea</taxon>
    </lineage>
</organism>
<sequence>MKSEEKIKLVSIVGPTASGKTELAVRLAERFDGEIVNADSMQVYRGMDIGTAKPSVSLRSRVTHHLIDIVTPDVNFSASDFRRAADGAIADIHSRGKRVFIVGGTGLYIRALLQGLVDSPSGDEQIRGELNELAKEIGNEGLLQLLAEVDPITAERLHHNDRVRIIRALEVYRQTGRPMSQFRQEHGFAEEMYDCLMLGINVERQELYSRVEKRVDEMVESGLAAEVEELFRLGYARDLKAMRSIGYKEICSFLSGEISLDQAVQLIKRDTRRYAKRQMTWFNKEYGIKWVEYPAAFANICNHVIEFFERGEDHAKSTFQHPGSVP</sequence>
<keyword id="KW-0067">ATP-binding</keyword>
<keyword id="KW-0460">Magnesium</keyword>
<keyword id="KW-0547">Nucleotide-binding</keyword>
<keyword id="KW-1185">Reference proteome</keyword>
<keyword id="KW-0808">Transferase</keyword>
<keyword id="KW-0819">tRNA processing</keyword>
<gene>
    <name evidence="1" type="primary">miaA2</name>
    <name type="ordered locus">Geob_3107</name>
</gene>